<dbReference type="EC" id="3.1.21.10" evidence="1"/>
<dbReference type="EMBL" id="CP000077">
    <property type="protein sequence ID" value="AAY81047.1"/>
    <property type="molecule type" value="Genomic_DNA"/>
</dbReference>
<dbReference type="RefSeq" id="WP_011278549.1">
    <property type="nucleotide sequence ID" value="NC_007181.1"/>
</dbReference>
<dbReference type="SMR" id="Q4J834"/>
<dbReference type="STRING" id="330779.Saci_1741"/>
<dbReference type="GeneID" id="14552234"/>
<dbReference type="KEGG" id="sai:Saci_1741"/>
<dbReference type="PATRIC" id="fig|330779.12.peg.1680"/>
<dbReference type="eggNOG" id="arCOG00919">
    <property type="taxonomic scope" value="Archaea"/>
</dbReference>
<dbReference type="HOGENOM" id="CLU_1881165_0_0_2"/>
<dbReference type="Proteomes" id="UP000001018">
    <property type="component" value="Chromosome"/>
</dbReference>
<dbReference type="GO" id="GO:0003677">
    <property type="term" value="F:DNA binding"/>
    <property type="evidence" value="ECO:0007669"/>
    <property type="project" value="UniProtKB-KW"/>
</dbReference>
<dbReference type="GO" id="GO:0004519">
    <property type="term" value="F:endonuclease activity"/>
    <property type="evidence" value="ECO:0007669"/>
    <property type="project" value="UniProtKB-KW"/>
</dbReference>
<dbReference type="GO" id="GO:0046872">
    <property type="term" value="F:metal ion binding"/>
    <property type="evidence" value="ECO:0007669"/>
    <property type="project" value="UniProtKB-KW"/>
</dbReference>
<dbReference type="GO" id="GO:0006310">
    <property type="term" value="P:DNA recombination"/>
    <property type="evidence" value="ECO:0007669"/>
    <property type="project" value="UniProtKB-KW"/>
</dbReference>
<dbReference type="GO" id="GO:0006281">
    <property type="term" value="P:DNA repair"/>
    <property type="evidence" value="ECO:0007669"/>
    <property type="project" value="UniProtKB-KW"/>
</dbReference>
<dbReference type="Gene3D" id="3.40.1350.10">
    <property type="match status" value="1"/>
</dbReference>
<dbReference type="InterPro" id="IPR002732">
    <property type="entry name" value="Hjc"/>
</dbReference>
<dbReference type="InterPro" id="IPR014428">
    <property type="entry name" value="Hjc_arc"/>
</dbReference>
<dbReference type="InterPro" id="IPR011335">
    <property type="entry name" value="Restrct_endonuc-II-like"/>
</dbReference>
<dbReference type="InterPro" id="IPR011856">
    <property type="entry name" value="tRNA_endonuc-like_dom_sf"/>
</dbReference>
<dbReference type="NCBIfam" id="NF040854">
    <property type="entry name" value="Hol_resolv_Hjc"/>
    <property type="match status" value="1"/>
</dbReference>
<dbReference type="PANTHER" id="PTHR39651">
    <property type="entry name" value="HOLLIDAY JUNCTION RESOLVASE HJC"/>
    <property type="match status" value="1"/>
</dbReference>
<dbReference type="PANTHER" id="PTHR39651:SF1">
    <property type="entry name" value="HOLLIDAY JUNCTION RESOLVASE HJC"/>
    <property type="match status" value="1"/>
</dbReference>
<dbReference type="Pfam" id="PF01870">
    <property type="entry name" value="Hjc"/>
    <property type="match status" value="1"/>
</dbReference>
<dbReference type="SUPFAM" id="SSF52980">
    <property type="entry name" value="Restriction endonuclease-like"/>
    <property type="match status" value="1"/>
</dbReference>
<evidence type="ECO:0000250" key="1">
    <source>
        <dbReference type="UniProtKB" id="Q97YX6"/>
    </source>
</evidence>
<evidence type="ECO:0000255" key="2"/>
<evidence type="ECO:0000269" key="3">
    <source>
    </source>
</evidence>
<evidence type="ECO:0000303" key="4">
    <source>
    </source>
</evidence>
<evidence type="ECO:0000305" key="5"/>
<evidence type="ECO:0000305" key="6">
    <source>
    </source>
</evidence>
<evidence type="ECO:0000312" key="7">
    <source>
        <dbReference type="EMBL" id="AAY81047.1"/>
    </source>
</evidence>
<gene>
    <name evidence="4" type="primary">hje</name>
    <name evidence="7" type="ordered locus">Saci_1741</name>
</gene>
<sequence>MNRDIGKSAERELVSILRSEGFNAVRIPTSNSSPNPLPDIFATKGNILLAIECKSTWEHKVKVKDRQVIKLFEFLSMFTMEGRALIAVKFKEIHKWKVMEIREIKEVEVTVDNSIFLENYISQFLENYIPQAGRELSKL</sequence>
<feature type="chain" id="PRO_0000459125" description="Crossover junction endodeoxyribonuclease Hje">
    <location>
        <begin position="1"/>
        <end position="139"/>
    </location>
</feature>
<feature type="binding site" evidence="2">
    <location>
        <position position="10"/>
    </location>
    <ligand>
        <name>Mg(2+)</name>
        <dbReference type="ChEBI" id="CHEBI:18420"/>
    </ligand>
</feature>
<feature type="binding site" evidence="2">
    <location>
        <position position="39"/>
    </location>
    <ligand>
        <name>Mg(2+)</name>
        <dbReference type="ChEBI" id="CHEBI:18420"/>
    </ligand>
</feature>
<feature type="binding site" evidence="2">
    <location>
        <position position="52"/>
    </location>
    <ligand>
        <name>Mg(2+)</name>
        <dbReference type="ChEBI" id="CHEBI:18420"/>
    </ligand>
</feature>
<feature type="site" description="Transition state stabilizer" evidence="2">
    <location>
        <position position="54"/>
    </location>
</feature>
<comment type="function">
    <text evidence="1">A structure-specific endonuclease that resolves Holliday junction (HJ) intermediates during genetic recombination. Acts only on 4-way DNA junctions in a sequence non-specific manner; introduces paired nicks in opposing strands 2 bases 3' of the point of strand exchange only on continuous strands of 4-way junction DNA. Cleaves both mobile and immobile junctions.</text>
</comment>
<comment type="function">
    <text evidence="3">Redundant function with Holliday junction resolvase Hjc.</text>
</comment>
<comment type="catalytic activity">
    <reaction evidence="1">
        <text>Endonucleolytic cleavage at a junction such as a reciprocal single-stranded crossover between two homologous DNA duplexes (Holliday junction).</text>
        <dbReference type="EC" id="3.1.21.10"/>
    </reaction>
</comment>
<comment type="cofactor">
    <cofactor evidence="1">
        <name>Mg(2+)</name>
        <dbReference type="ChEBI" id="CHEBI:18420"/>
    </cofactor>
</comment>
<comment type="subunit">
    <text evidence="1">Homodimer.</text>
</comment>
<comment type="disruption phenotype">
    <text evidence="3">Not essential, it can be disrupted. No change in sensitivity to mitomycin C. Double hjc-hje mutants cannot be made, double hje-pina mutants grow more slowly at 55 degrees Celsius (versus 65 or 75 degrees) and do not grow to the same cell density as wild-type.</text>
</comment>
<comment type="miscellaneous">
    <text evidence="6">A second Holliday junction resolving enzyme, Hjc, probbly with different substrate specificity, exists in this organism.</text>
</comment>
<comment type="similarity">
    <text evidence="5">Belongs to the Holliday junction resolvase Hjc family. Hje subfamily.</text>
</comment>
<name>HJE_SULAC</name>
<reference evidence="7" key="1">
    <citation type="journal article" date="2005" name="J. Bacteriol.">
        <title>The genome of Sulfolobus acidocaldarius, a model organism of the Crenarchaeota.</title>
        <authorList>
            <person name="Chen L."/>
            <person name="Bruegger K."/>
            <person name="Skovgaard M."/>
            <person name="Redder P."/>
            <person name="She Q."/>
            <person name="Torarinsson E."/>
            <person name="Greve B."/>
            <person name="Awayez M."/>
            <person name="Zibat A."/>
            <person name="Klenk H.-P."/>
            <person name="Garrett R.A."/>
        </authorList>
    </citation>
    <scope>NUCLEOTIDE SEQUENCE [LARGE SCALE GENOMIC DNA]</scope>
    <source>
        <strain>ATCC 33909 / DSM 639 / JCM 8929 / NBRC 15157 / NCIMB 11770</strain>
    </source>
</reference>
<reference key="2">
    <citation type="journal article" date="2022" name="Int. J. Mol. Sci.">
        <title>Genetic Study of Four Candidate Holliday Junction Processing Proteins in the Thermophilic Crenarchaeon Sulfolobus acidocaldarius.</title>
        <authorList>
            <person name="Matsuda R."/>
            <person name="Suzuki S."/>
            <person name="Kurosawa N."/>
        </authorList>
    </citation>
    <scope>FUNCTION</scope>
    <scope>DISRUPTION PHENOTYPE</scope>
    <source>
        <strain>MR31 / DP-1</strain>
    </source>
</reference>
<keyword id="KW-0227">DNA damage</keyword>
<keyword id="KW-0233">DNA recombination</keyword>
<keyword id="KW-0234">DNA repair</keyword>
<keyword id="KW-0238">DNA-binding</keyword>
<keyword id="KW-0255">Endonuclease</keyword>
<keyword id="KW-0378">Hydrolase</keyword>
<keyword id="KW-0460">Magnesium</keyword>
<keyword id="KW-0479">Metal-binding</keyword>
<keyword id="KW-0540">Nuclease</keyword>
<keyword id="KW-1185">Reference proteome</keyword>
<proteinExistence type="inferred from homology"/>
<protein>
    <recommendedName>
        <fullName evidence="5">Crossover junction endodeoxyribonuclease Hje</fullName>
        <shortName evidence="4">Hje</shortName>
        <ecNumber evidence="1">3.1.21.10</ecNumber>
    </recommendedName>
    <alternativeName>
        <fullName evidence="4">Holliday junction endonuclease Hje</fullName>
    </alternativeName>
    <alternativeName>
        <fullName>Holliday junction resolvase Hje</fullName>
    </alternativeName>
</protein>
<accession>Q4J834</accession>
<organism>
    <name type="scientific">Sulfolobus acidocaldarius (strain ATCC 33909 / DSM 639 / JCM 8929 / NBRC 15157 / NCIMB 11770)</name>
    <dbReference type="NCBI Taxonomy" id="330779"/>
    <lineage>
        <taxon>Archaea</taxon>
        <taxon>Thermoproteota</taxon>
        <taxon>Thermoprotei</taxon>
        <taxon>Sulfolobales</taxon>
        <taxon>Sulfolobaceae</taxon>
        <taxon>Sulfolobus</taxon>
    </lineage>
</organism>